<feature type="chain" id="PRO_0000381043" description="8-amino-7-oxononanoate synthase">
    <location>
        <begin position="1"/>
        <end position="386"/>
    </location>
</feature>
<feature type="binding site" evidence="1">
    <location>
        <position position="31"/>
    </location>
    <ligand>
        <name>substrate</name>
    </ligand>
</feature>
<feature type="binding site" evidence="1">
    <location>
        <begin position="109"/>
        <end position="110"/>
    </location>
    <ligand>
        <name>pyridoxal 5'-phosphate</name>
        <dbReference type="ChEBI" id="CHEBI:597326"/>
    </ligand>
</feature>
<feature type="binding site" evidence="1">
    <location>
        <position position="134"/>
    </location>
    <ligand>
        <name>substrate</name>
    </ligand>
</feature>
<feature type="binding site" evidence="1">
    <location>
        <position position="180"/>
    </location>
    <ligand>
        <name>pyridoxal 5'-phosphate</name>
        <dbReference type="ChEBI" id="CHEBI:597326"/>
    </ligand>
</feature>
<feature type="binding site" evidence="1">
    <location>
        <begin position="205"/>
        <end position="208"/>
    </location>
    <ligand>
        <name>pyridoxal 5'-phosphate</name>
        <dbReference type="ChEBI" id="CHEBI:597326"/>
    </ligand>
</feature>
<feature type="binding site" evidence="1">
    <location>
        <begin position="236"/>
        <end position="239"/>
    </location>
    <ligand>
        <name>pyridoxal 5'-phosphate</name>
        <dbReference type="ChEBI" id="CHEBI:597326"/>
    </ligand>
</feature>
<feature type="binding site" evidence="1">
    <location>
        <position position="349"/>
    </location>
    <ligand>
        <name>substrate</name>
    </ligand>
</feature>
<feature type="modified residue" description="N6-(pyridoxal phosphate)lysine" evidence="1">
    <location>
        <position position="239"/>
    </location>
</feature>
<sequence>MKAATQARIDDSPLAWLDAVQRQRHEAGLRRCLRPRPAVATELDLASNDYLGLSRHPAVIDGGVQALRIWGAGATGSRLVTGDTKLHQQFEAELAEFVGAAAGLLFSSGYTANLGAVVGLSGPGSLLVSDARSHASLVDACRLSRARVVVTPHRDVDAVDAALRSRDEQRAVVVTDSVFSADGSLAPVRELLEVCRRHGALLLVDEAHGLGVRGGGRGLLYELGLAGAPDVVMTTTLSKALGSQGGVVLGPTPVRAHLIDAARPFIFDTGLAPAAVGAARAALRVLQAEPWRPQAVLNHAGELARMCGVAAVPDSAMVSVILGEPESAVAAAAACLDAGVKVGCFRPPTVPAGTSRLRLTARASLNAGELELARRVLTDVLAVARR</sequence>
<comment type="function">
    <text evidence="1">Catalyzes the decarboxylative condensation of pimeloyl-[acyl-carrier protein] and L-alanine to produce 8-amino-7-oxononanoate (AON), [acyl-carrier protein], and carbon dioxide.</text>
</comment>
<comment type="catalytic activity">
    <reaction>
        <text>6-carboxyhexanoyl-[ACP] + L-alanine + H(+) = (8S)-8-amino-7-oxononanoate + holo-[ACP] + CO2</text>
        <dbReference type="Rhea" id="RHEA:42288"/>
        <dbReference type="Rhea" id="RHEA-COMP:9685"/>
        <dbReference type="Rhea" id="RHEA-COMP:9955"/>
        <dbReference type="ChEBI" id="CHEBI:15378"/>
        <dbReference type="ChEBI" id="CHEBI:16526"/>
        <dbReference type="ChEBI" id="CHEBI:57972"/>
        <dbReference type="ChEBI" id="CHEBI:64479"/>
        <dbReference type="ChEBI" id="CHEBI:78846"/>
        <dbReference type="ChEBI" id="CHEBI:149468"/>
        <dbReference type="EC" id="2.3.1.47"/>
    </reaction>
</comment>
<comment type="cofactor">
    <cofactor evidence="1">
        <name>pyridoxal 5'-phosphate</name>
        <dbReference type="ChEBI" id="CHEBI:597326"/>
    </cofactor>
</comment>
<comment type="pathway">
    <text>Cofactor biosynthesis; biotin biosynthesis.</text>
</comment>
<comment type="subunit">
    <text evidence="1">Homodimer.</text>
</comment>
<comment type="similarity">
    <text evidence="2">Belongs to the class-II pyridoxal-phosphate-dependent aminotransferase family. BioF subfamily.</text>
</comment>
<proteinExistence type="inferred from homology"/>
<evidence type="ECO:0000250" key="1"/>
<evidence type="ECO:0000305" key="2"/>
<gene>
    <name type="ordered locus">MRA_1581</name>
</gene>
<dbReference type="EC" id="2.3.1.47"/>
<dbReference type="EMBL" id="CP000611">
    <property type="protein sequence ID" value="ABQ73326.1"/>
    <property type="molecule type" value="Genomic_DNA"/>
</dbReference>
<dbReference type="RefSeq" id="WP_003407805.1">
    <property type="nucleotide sequence ID" value="NZ_CP016972.1"/>
</dbReference>
<dbReference type="SMR" id="A5U2S6"/>
<dbReference type="KEGG" id="mra:MRA_1581"/>
<dbReference type="eggNOG" id="COG0156">
    <property type="taxonomic scope" value="Bacteria"/>
</dbReference>
<dbReference type="HOGENOM" id="CLU_015846_11_2_11"/>
<dbReference type="UniPathway" id="UPA00078"/>
<dbReference type="Proteomes" id="UP000001988">
    <property type="component" value="Chromosome"/>
</dbReference>
<dbReference type="GO" id="GO:0008710">
    <property type="term" value="F:8-amino-7-oxononanoate synthase activity"/>
    <property type="evidence" value="ECO:0007669"/>
    <property type="project" value="UniProtKB-EC"/>
</dbReference>
<dbReference type="GO" id="GO:0030170">
    <property type="term" value="F:pyridoxal phosphate binding"/>
    <property type="evidence" value="ECO:0007669"/>
    <property type="project" value="InterPro"/>
</dbReference>
<dbReference type="GO" id="GO:0009102">
    <property type="term" value="P:biotin biosynthetic process"/>
    <property type="evidence" value="ECO:0007669"/>
    <property type="project" value="UniProtKB-UniPathway"/>
</dbReference>
<dbReference type="FunFam" id="3.40.640.10:FF:000130">
    <property type="entry name" value="8-amino-7-oxononanoate synthase"/>
    <property type="match status" value="1"/>
</dbReference>
<dbReference type="Gene3D" id="3.90.1150.10">
    <property type="entry name" value="Aspartate Aminotransferase, domain 1"/>
    <property type="match status" value="1"/>
</dbReference>
<dbReference type="Gene3D" id="3.40.640.10">
    <property type="entry name" value="Type I PLP-dependent aspartate aminotransferase-like (Major domain)"/>
    <property type="match status" value="1"/>
</dbReference>
<dbReference type="InterPro" id="IPR001917">
    <property type="entry name" value="Aminotrans_II_pyridoxalP_BS"/>
</dbReference>
<dbReference type="InterPro" id="IPR004839">
    <property type="entry name" value="Aminotransferase_I/II_large"/>
</dbReference>
<dbReference type="InterPro" id="IPR050087">
    <property type="entry name" value="AON_synthase_class-II"/>
</dbReference>
<dbReference type="InterPro" id="IPR015424">
    <property type="entry name" value="PyrdxlP-dep_Trfase"/>
</dbReference>
<dbReference type="InterPro" id="IPR015421">
    <property type="entry name" value="PyrdxlP-dep_Trfase_major"/>
</dbReference>
<dbReference type="InterPro" id="IPR015422">
    <property type="entry name" value="PyrdxlP-dep_Trfase_small"/>
</dbReference>
<dbReference type="PANTHER" id="PTHR13693:SF100">
    <property type="entry name" value="8-AMINO-7-OXONONANOATE SYNTHASE"/>
    <property type="match status" value="1"/>
</dbReference>
<dbReference type="PANTHER" id="PTHR13693">
    <property type="entry name" value="CLASS II AMINOTRANSFERASE/8-AMINO-7-OXONONANOATE SYNTHASE"/>
    <property type="match status" value="1"/>
</dbReference>
<dbReference type="Pfam" id="PF00155">
    <property type="entry name" value="Aminotran_1_2"/>
    <property type="match status" value="1"/>
</dbReference>
<dbReference type="SUPFAM" id="SSF53383">
    <property type="entry name" value="PLP-dependent transferases"/>
    <property type="match status" value="1"/>
</dbReference>
<dbReference type="PROSITE" id="PS00599">
    <property type="entry name" value="AA_TRANSFER_CLASS_2"/>
    <property type="match status" value="1"/>
</dbReference>
<organism>
    <name type="scientific">Mycobacterium tuberculosis (strain ATCC 25177 / H37Ra)</name>
    <dbReference type="NCBI Taxonomy" id="419947"/>
    <lineage>
        <taxon>Bacteria</taxon>
        <taxon>Bacillati</taxon>
        <taxon>Actinomycetota</taxon>
        <taxon>Actinomycetes</taxon>
        <taxon>Mycobacteriales</taxon>
        <taxon>Mycobacteriaceae</taxon>
        <taxon>Mycobacterium</taxon>
        <taxon>Mycobacterium tuberculosis complex</taxon>
    </lineage>
</organism>
<protein>
    <recommendedName>
        <fullName>8-amino-7-oxononanoate synthase</fullName>
        <shortName>AONS</shortName>
        <ecNumber>2.3.1.47</ecNumber>
    </recommendedName>
    <alternativeName>
        <fullName>7-keto-8-amino-pelargonic acid synthase</fullName>
        <shortName>7-KAP synthase</shortName>
        <shortName>KAPA synthase</shortName>
    </alternativeName>
    <alternativeName>
        <fullName>8-amino-7-ketopelargonate synthase</fullName>
    </alternativeName>
    <alternativeName>
        <fullName>Alpha-oxoamine synthase</fullName>
    </alternativeName>
</protein>
<keyword id="KW-0012">Acyltransferase</keyword>
<keyword id="KW-0093">Biotin biosynthesis</keyword>
<keyword id="KW-0663">Pyridoxal phosphate</keyword>
<keyword id="KW-1185">Reference proteome</keyword>
<keyword id="KW-0808">Transferase</keyword>
<name>BIOF_MYCTA</name>
<accession>A5U2S6</accession>
<reference key="1">
    <citation type="journal article" date="2008" name="PLoS ONE">
        <title>Genetic basis of virulence attenuation revealed by comparative genomic analysis of Mycobacterium tuberculosis strain H37Ra versus H37Rv.</title>
        <authorList>
            <person name="Zheng H."/>
            <person name="Lu L."/>
            <person name="Wang B."/>
            <person name="Pu S."/>
            <person name="Zhang X."/>
            <person name="Zhu G."/>
            <person name="Shi W."/>
            <person name="Zhang L."/>
            <person name="Wang H."/>
            <person name="Wang S."/>
            <person name="Zhao G."/>
            <person name="Zhang Y."/>
        </authorList>
    </citation>
    <scope>NUCLEOTIDE SEQUENCE [LARGE SCALE GENOMIC DNA]</scope>
    <source>
        <strain>ATCC 25177 / H37Ra</strain>
    </source>
</reference>